<keyword id="KW-0961">Cell wall biogenesis/degradation</keyword>
<keyword id="KW-0325">Glycoprotein</keyword>
<keyword id="KW-0328">Glycosyltransferase</keyword>
<keyword id="KW-0333">Golgi apparatus</keyword>
<keyword id="KW-0472">Membrane</keyword>
<keyword id="KW-1185">Reference proteome</keyword>
<keyword id="KW-0735">Signal-anchor</keyword>
<keyword id="KW-0808">Transferase</keyword>
<keyword id="KW-0812">Transmembrane</keyword>
<keyword id="KW-1133">Transmembrane helix</keyword>
<gene>
    <name type="ordered locus">Os01g0926600</name>
    <name type="ordered locus">LOC_Os01g70190</name>
    <name type="ORF">OsJ_04617</name>
    <name type="ORF">OSJNBa0093F16.18</name>
    <name type="ORF">P0482D04.16</name>
</gene>
<reference key="1">
    <citation type="journal article" date="2002" name="Nature">
        <title>The genome sequence and structure of rice chromosome 1.</title>
        <authorList>
            <person name="Sasaki T."/>
            <person name="Matsumoto T."/>
            <person name="Yamamoto K."/>
            <person name="Sakata K."/>
            <person name="Baba T."/>
            <person name="Katayose Y."/>
            <person name="Wu J."/>
            <person name="Niimura Y."/>
            <person name="Cheng Z."/>
            <person name="Nagamura Y."/>
            <person name="Antonio B.A."/>
            <person name="Kanamori H."/>
            <person name="Hosokawa S."/>
            <person name="Masukawa M."/>
            <person name="Arikawa K."/>
            <person name="Chiden Y."/>
            <person name="Hayashi M."/>
            <person name="Okamoto M."/>
            <person name="Ando T."/>
            <person name="Aoki H."/>
            <person name="Arita K."/>
            <person name="Hamada M."/>
            <person name="Harada C."/>
            <person name="Hijishita S."/>
            <person name="Honda M."/>
            <person name="Ichikawa Y."/>
            <person name="Idonuma A."/>
            <person name="Iijima M."/>
            <person name="Ikeda M."/>
            <person name="Ikeno M."/>
            <person name="Ito S."/>
            <person name="Ito T."/>
            <person name="Ito Y."/>
            <person name="Ito Y."/>
            <person name="Iwabuchi A."/>
            <person name="Kamiya K."/>
            <person name="Karasawa W."/>
            <person name="Katagiri S."/>
            <person name="Kikuta A."/>
            <person name="Kobayashi N."/>
            <person name="Kono I."/>
            <person name="Machita K."/>
            <person name="Maehara T."/>
            <person name="Mizuno H."/>
            <person name="Mizubayashi T."/>
            <person name="Mukai Y."/>
            <person name="Nagasaki H."/>
            <person name="Nakashima M."/>
            <person name="Nakama Y."/>
            <person name="Nakamichi Y."/>
            <person name="Nakamura M."/>
            <person name="Namiki N."/>
            <person name="Negishi M."/>
            <person name="Ohta I."/>
            <person name="Ono N."/>
            <person name="Saji S."/>
            <person name="Sakai K."/>
            <person name="Shibata M."/>
            <person name="Shimokawa T."/>
            <person name="Shomura A."/>
            <person name="Song J."/>
            <person name="Takazaki Y."/>
            <person name="Terasawa K."/>
            <person name="Tsuji K."/>
            <person name="Waki K."/>
            <person name="Yamagata H."/>
            <person name="Yamane H."/>
            <person name="Yoshiki S."/>
            <person name="Yoshihara R."/>
            <person name="Yukawa K."/>
            <person name="Zhong H."/>
            <person name="Iwama H."/>
            <person name="Endo T."/>
            <person name="Ito H."/>
            <person name="Hahn J.H."/>
            <person name="Kim H.-I."/>
            <person name="Eun M.-Y."/>
            <person name="Yano M."/>
            <person name="Jiang J."/>
            <person name="Gojobori T."/>
        </authorList>
    </citation>
    <scope>NUCLEOTIDE SEQUENCE [LARGE SCALE GENOMIC DNA]</scope>
    <source>
        <strain>cv. Nipponbare</strain>
    </source>
</reference>
<reference key="2">
    <citation type="journal article" date="2005" name="Nature">
        <title>The map-based sequence of the rice genome.</title>
        <authorList>
            <consortium name="International rice genome sequencing project (IRGSP)"/>
        </authorList>
    </citation>
    <scope>NUCLEOTIDE SEQUENCE [LARGE SCALE GENOMIC DNA]</scope>
    <source>
        <strain>cv. Nipponbare</strain>
    </source>
</reference>
<reference key="3">
    <citation type="journal article" date="2008" name="Nucleic Acids Res.">
        <title>The rice annotation project database (RAP-DB): 2008 update.</title>
        <authorList>
            <consortium name="The rice annotation project (RAP)"/>
        </authorList>
    </citation>
    <scope>GENOME REANNOTATION</scope>
    <source>
        <strain>cv. Nipponbare</strain>
    </source>
</reference>
<reference key="4">
    <citation type="journal article" date="2013" name="Rice">
        <title>Improvement of the Oryza sativa Nipponbare reference genome using next generation sequence and optical map data.</title>
        <authorList>
            <person name="Kawahara Y."/>
            <person name="de la Bastide M."/>
            <person name="Hamilton J.P."/>
            <person name="Kanamori H."/>
            <person name="McCombie W.R."/>
            <person name="Ouyang S."/>
            <person name="Schwartz D.C."/>
            <person name="Tanaka T."/>
            <person name="Wu J."/>
            <person name="Zhou S."/>
            <person name="Childs K.L."/>
            <person name="Davidson R.M."/>
            <person name="Lin H."/>
            <person name="Quesada-Ocampo L."/>
            <person name="Vaillancourt B."/>
            <person name="Sakai H."/>
            <person name="Lee S.S."/>
            <person name="Kim J."/>
            <person name="Numa H."/>
            <person name="Itoh T."/>
            <person name="Buell C.R."/>
            <person name="Matsumoto T."/>
        </authorList>
    </citation>
    <scope>GENOME REANNOTATION</scope>
    <source>
        <strain>cv. Nipponbare</strain>
    </source>
</reference>
<reference key="5">
    <citation type="journal article" date="2005" name="PLoS Biol.">
        <title>The genomes of Oryza sativa: a history of duplications.</title>
        <authorList>
            <person name="Yu J."/>
            <person name="Wang J."/>
            <person name="Lin W."/>
            <person name="Li S."/>
            <person name="Li H."/>
            <person name="Zhou J."/>
            <person name="Ni P."/>
            <person name="Dong W."/>
            <person name="Hu S."/>
            <person name="Zeng C."/>
            <person name="Zhang J."/>
            <person name="Zhang Y."/>
            <person name="Li R."/>
            <person name="Xu Z."/>
            <person name="Li S."/>
            <person name="Li X."/>
            <person name="Zheng H."/>
            <person name="Cong L."/>
            <person name="Lin L."/>
            <person name="Yin J."/>
            <person name="Geng J."/>
            <person name="Li G."/>
            <person name="Shi J."/>
            <person name="Liu J."/>
            <person name="Lv H."/>
            <person name="Li J."/>
            <person name="Wang J."/>
            <person name="Deng Y."/>
            <person name="Ran L."/>
            <person name="Shi X."/>
            <person name="Wang X."/>
            <person name="Wu Q."/>
            <person name="Li C."/>
            <person name="Ren X."/>
            <person name="Wang J."/>
            <person name="Wang X."/>
            <person name="Li D."/>
            <person name="Liu D."/>
            <person name="Zhang X."/>
            <person name="Ji Z."/>
            <person name="Zhao W."/>
            <person name="Sun Y."/>
            <person name="Zhang Z."/>
            <person name="Bao J."/>
            <person name="Han Y."/>
            <person name="Dong L."/>
            <person name="Ji J."/>
            <person name="Chen P."/>
            <person name="Wu S."/>
            <person name="Liu J."/>
            <person name="Xiao Y."/>
            <person name="Bu D."/>
            <person name="Tan J."/>
            <person name="Yang L."/>
            <person name="Ye C."/>
            <person name="Zhang J."/>
            <person name="Xu J."/>
            <person name="Zhou Y."/>
            <person name="Yu Y."/>
            <person name="Zhang B."/>
            <person name="Zhuang S."/>
            <person name="Wei H."/>
            <person name="Liu B."/>
            <person name="Lei M."/>
            <person name="Yu H."/>
            <person name="Li Y."/>
            <person name="Xu H."/>
            <person name="Wei S."/>
            <person name="He X."/>
            <person name="Fang L."/>
            <person name="Zhang Z."/>
            <person name="Zhang Y."/>
            <person name="Huang X."/>
            <person name="Su Z."/>
            <person name="Tong W."/>
            <person name="Li J."/>
            <person name="Tong Z."/>
            <person name="Li S."/>
            <person name="Ye J."/>
            <person name="Wang L."/>
            <person name="Fang L."/>
            <person name="Lei T."/>
            <person name="Chen C.-S."/>
            <person name="Chen H.-C."/>
            <person name="Xu Z."/>
            <person name="Li H."/>
            <person name="Huang H."/>
            <person name="Zhang F."/>
            <person name="Xu H."/>
            <person name="Li N."/>
            <person name="Zhao C."/>
            <person name="Li S."/>
            <person name="Dong L."/>
            <person name="Huang Y."/>
            <person name="Li L."/>
            <person name="Xi Y."/>
            <person name="Qi Q."/>
            <person name="Li W."/>
            <person name="Zhang B."/>
            <person name="Hu W."/>
            <person name="Zhang Y."/>
            <person name="Tian X."/>
            <person name="Jiao Y."/>
            <person name="Liang X."/>
            <person name="Jin J."/>
            <person name="Gao L."/>
            <person name="Zheng W."/>
            <person name="Hao B."/>
            <person name="Liu S.-M."/>
            <person name="Wang W."/>
            <person name="Yuan L."/>
            <person name="Cao M."/>
            <person name="McDermott J."/>
            <person name="Samudrala R."/>
            <person name="Wang J."/>
            <person name="Wong G.K.-S."/>
            <person name="Yang H."/>
        </authorList>
    </citation>
    <scope>NUCLEOTIDE SEQUENCE [LARGE SCALE GENOMIC DNA]</scope>
    <source>
        <strain>cv. Nipponbare</strain>
    </source>
</reference>
<reference key="6">
    <citation type="journal article" date="2003" name="Science">
        <title>Collection, mapping, and annotation of over 28,000 cDNA clones from japonica rice.</title>
        <authorList>
            <consortium name="The rice full-length cDNA consortium"/>
        </authorList>
    </citation>
    <scope>NUCLEOTIDE SEQUENCE [LARGE SCALE MRNA]</scope>
    <source>
        <strain>cv. Nipponbare</strain>
    </source>
</reference>
<protein>
    <recommendedName>
        <fullName>Probable glucuronosyltransferase Os01g0926600</fullName>
        <ecNumber>2.4.-.-</ecNumber>
    </recommendedName>
</protein>
<accession>Q8S1X8</accession>
<accession>A0A0P0VCE7</accession>
<dbReference type="EC" id="2.4.-.-"/>
<dbReference type="EMBL" id="AP003262">
    <property type="protein sequence ID" value="BAB89669.1"/>
    <property type="molecule type" value="Genomic_DNA"/>
</dbReference>
<dbReference type="EMBL" id="AP004332">
    <property type="protein sequence ID" value="BAB92892.1"/>
    <property type="molecule type" value="Genomic_DNA"/>
</dbReference>
<dbReference type="EMBL" id="AP008207">
    <property type="protein sequence ID" value="BAF07177.1"/>
    <property type="molecule type" value="Genomic_DNA"/>
</dbReference>
<dbReference type="EMBL" id="AP014957">
    <property type="protein sequence ID" value="BAS75996.1"/>
    <property type="molecule type" value="Genomic_DNA"/>
</dbReference>
<dbReference type="EMBL" id="CM000138">
    <property type="protein sequence ID" value="EAZ14692.1"/>
    <property type="molecule type" value="Genomic_DNA"/>
</dbReference>
<dbReference type="EMBL" id="AK068465">
    <property type="protein sequence ID" value="BAG90922.1"/>
    <property type="molecule type" value="mRNA"/>
</dbReference>
<dbReference type="RefSeq" id="XP_015622242.1">
    <property type="nucleotide sequence ID" value="XM_015766756.1"/>
</dbReference>
<dbReference type="FunCoup" id="Q8S1X8">
    <property type="interactions" value="1"/>
</dbReference>
<dbReference type="STRING" id="39947.Q8S1X8"/>
<dbReference type="CAZy" id="GT47">
    <property type="family name" value="Glycosyltransferase Family 47"/>
</dbReference>
<dbReference type="PaxDb" id="39947-Q8S1X8"/>
<dbReference type="EnsemblPlants" id="Os01t0926600-01">
    <property type="protein sequence ID" value="Os01t0926600-01"/>
    <property type="gene ID" value="Os01g0926600"/>
</dbReference>
<dbReference type="Gramene" id="Os01t0926600-01">
    <property type="protein sequence ID" value="Os01t0926600-01"/>
    <property type="gene ID" value="Os01g0926600"/>
</dbReference>
<dbReference type="KEGG" id="dosa:Os01g0926600"/>
<dbReference type="eggNOG" id="KOG1021">
    <property type="taxonomic scope" value="Eukaryota"/>
</dbReference>
<dbReference type="HOGENOM" id="CLU_039682_1_0_1"/>
<dbReference type="InParanoid" id="Q8S1X8"/>
<dbReference type="OMA" id="VQCGCIP"/>
<dbReference type="OrthoDB" id="1924787at2759"/>
<dbReference type="Proteomes" id="UP000000763">
    <property type="component" value="Chromosome 1"/>
</dbReference>
<dbReference type="Proteomes" id="UP000007752">
    <property type="component" value="Chromosome 1"/>
</dbReference>
<dbReference type="Proteomes" id="UP000059680">
    <property type="component" value="Chromosome 1"/>
</dbReference>
<dbReference type="GO" id="GO:0000139">
    <property type="term" value="C:Golgi membrane"/>
    <property type="evidence" value="ECO:0007669"/>
    <property type="project" value="UniProtKB-SubCell"/>
</dbReference>
<dbReference type="GO" id="GO:0016757">
    <property type="term" value="F:glycosyltransferase activity"/>
    <property type="evidence" value="ECO:0007669"/>
    <property type="project" value="UniProtKB-KW"/>
</dbReference>
<dbReference type="GO" id="GO:0071555">
    <property type="term" value="P:cell wall organization"/>
    <property type="evidence" value="ECO:0007669"/>
    <property type="project" value="UniProtKB-KW"/>
</dbReference>
<dbReference type="GO" id="GO:0010417">
    <property type="term" value="P:glucuronoxylan biosynthetic process"/>
    <property type="evidence" value="ECO:0000318"/>
    <property type="project" value="GO_Central"/>
</dbReference>
<dbReference type="GO" id="GO:0009834">
    <property type="term" value="P:plant-type secondary cell wall biogenesis"/>
    <property type="evidence" value="ECO:0000318"/>
    <property type="project" value="GO_Central"/>
</dbReference>
<dbReference type="GO" id="GO:0006486">
    <property type="term" value="P:protein glycosylation"/>
    <property type="evidence" value="ECO:0007669"/>
    <property type="project" value="InterPro"/>
</dbReference>
<dbReference type="InterPro" id="IPR004263">
    <property type="entry name" value="Exostosin"/>
</dbReference>
<dbReference type="InterPro" id="IPR040911">
    <property type="entry name" value="Exostosin_GT47"/>
</dbReference>
<dbReference type="PANTHER" id="PTHR11062">
    <property type="entry name" value="EXOSTOSIN HEPARAN SULFATE GLYCOSYLTRANSFERASE -RELATED"/>
    <property type="match status" value="1"/>
</dbReference>
<dbReference type="PANTHER" id="PTHR11062:SF399">
    <property type="entry name" value="GLUCURONOSYLTRANSFERASE OS01G0926600-RELATED"/>
    <property type="match status" value="1"/>
</dbReference>
<dbReference type="Pfam" id="PF03016">
    <property type="entry name" value="Exostosin_GT47"/>
    <property type="match status" value="1"/>
</dbReference>
<evidence type="ECO:0000250" key="1"/>
<evidence type="ECO:0000255" key="2"/>
<evidence type="ECO:0000305" key="3"/>
<sequence length="415" mass="46902">MAMRLSSAAVALALLLAATALEDVARGQDTERIEGSAGDVLEDDPVGRLKVYVYELPTKYNKKMVAKDSRCLSHMFAAEIFMHRFLLSSAIRTLNPEEADWFYTPVYTTCDLTPWGHPLPFKSPRIMRSAIQFISSHWPYWNRTDGADHFFVVPHDFGACFHYQEEKAIERGILPLLRRATLVQTFGQKDHVCLKEGSITIPPYAPPQKMKTHLVPPETPRSIFVYFRGLFYDTANDPEGGYYARGARASVWENFKNNPLFDISTDHPPTYYEDMQRSIFCLCPLGWAPWSPRLVEAVVFGCIPVIIADDIVLPFADAIPWDEIGVFVAEDDVPKLDTILTSIPMDVILRKQRLLANPSMKQAMLFPQPAQPGDAFHQILNGLGRKLPHPKSVYLDPGQKVLNWTQGPVGDLKPW</sequence>
<organism>
    <name type="scientific">Oryza sativa subsp. japonica</name>
    <name type="common">Rice</name>
    <dbReference type="NCBI Taxonomy" id="39947"/>
    <lineage>
        <taxon>Eukaryota</taxon>
        <taxon>Viridiplantae</taxon>
        <taxon>Streptophyta</taxon>
        <taxon>Embryophyta</taxon>
        <taxon>Tracheophyta</taxon>
        <taxon>Spermatophyta</taxon>
        <taxon>Magnoliopsida</taxon>
        <taxon>Liliopsida</taxon>
        <taxon>Poales</taxon>
        <taxon>Poaceae</taxon>
        <taxon>BOP clade</taxon>
        <taxon>Oryzoideae</taxon>
        <taxon>Oryzeae</taxon>
        <taxon>Oryzinae</taxon>
        <taxon>Oryza</taxon>
        <taxon>Oryza sativa</taxon>
    </lineage>
</organism>
<comment type="function">
    <text evidence="1">Involved in the synthesis of glucuronoxylan hemicellulose in secondary cell walls.</text>
</comment>
<comment type="subcellular location">
    <subcellularLocation>
        <location evidence="1">Golgi apparatus membrane</location>
        <topology evidence="1">Single-pass type II membrane protein</topology>
    </subcellularLocation>
</comment>
<comment type="similarity">
    <text evidence="3">Belongs to the glycosyltransferase 47 family.</text>
</comment>
<name>GT14_ORYSJ</name>
<feature type="chain" id="PRO_0000407568" description="Probable glucuronosyltransferase Os01g0926600">
    <location>
        <begin position="1"/>
        <end position="415"/>
    </location>
</feature>
<feature type="topological domain" description="Cytoplasmic" evidence="2">
    <location>
        <begin position="1"/>
        <end position="4"/>
    </location>
</feature>
<feature type="transmembrane region" description="Helical; Signal-anchor for type II membrane protein" evidence="2">
    <location>
        <begin position="5"/>
        <end position="25"/>
    </location>
</feature>
<feature type="topological domain" description="Lumenal" evidence="2">
    <location>
        <begin position="26"/>
        <end position="415"/>
    </location>
</feature>
<feature type="glycosylation site" description="N-linked (GlcNAc...) asparagine" evidence="2">
    <location>
        <position position="142"/>
    </location>
</feature>
<feature type="glycosylation site" description="N-linked (GlcNAc...) asparagine" evidence="2">
    <location>
        <position position="403"/>
    </location>
</feature>
<proteinExistence type="evidence at transcript level"/>